<evidence type="ECO:0000250" key="1">
    <source>
        <dbReference type="UniProtKB" id="Q8BIV7"/>
    </source>
</evidence>
<evidence type="ECO:0000250" key="2">
    <source>
        <dbReference type="UniProtKB" id="Q8K4S3"/>
    </source>
</evidence>
<evidence type="ECO:0000255" key="3"/>
<evidence type="ECO:0000256" key="4">
    <source>
        <dbReference type="SAM" id="MobiDB-lite"/>
    </source>
</evidence>
<evidence type="ECO:0000269" key="5">
    <source>
    </source>
</evidence>
<evidence type="ECO:0000269" key="6">
    <source>
    </source>
</evidence>
<evidence type="ECO:0000269" key="7">
    <source>
    </source>
</evidence>
<evidence type="ECO:0000305" key="8"/>
<evidence type="ECO:0000312" key="9">
    <source>
        <dbReference type="HGNC" id="HGNC:17939"/>
    </source>
</evidence>
<proteinExistence type="evidence at protein level"/>
<sequence>MIPAASSTPPGDALFPSVAPQDFWRSQVTGYSGSVTRHLSHRANNFKRHPKRRKCIRPSPPPPPNTPCPLELVDFGDLHPQRSFRELLFNGCILFGIEFSYAMETAYVTPVLLQMGLPDQLYSLVWFISPILGFLLQPLLGAWSDRCTSRFGRRRPFILVLAIGALLGLSLLLNGRDIGIALADVTGNHKWGLLLTVCGVVLMDFSADSADNPSHAYMMDVCSPADQDRGLNIHALLAGLGGGFGYVVGGIHWDKTGFGRALGGQLRVIYLFTAVTLSVTTVLTLVSIPERPLRPPSEKRAAMKSPSLPLPPSPPVLPEEGPGDSLPSHTATNFSSPISPPSPLTPKYGSFISRDSSLTGISEFASSFGTANIDSVLIDCFTGGHDSYLAIPGSVPRPPISVSFPRAPDGFYRQDRGLLEGREGALTSGCDGDILRVGSLDTSKPRSSGILKRPQTLAIPDAAGGGGPETSRRRNVTFSQQVANILLNGVKYESELTGSSERAEQPLSVGRLCSTICNMPKALRTLCVNHFLGWLSFEGMLLFYTDFMGEVVFQGDPKAPHTSEAYQKYNSGVTMGCWGMCIYAFSAAFYSAILEKLEEFLSVRTLYFIAYLAFGLGTGLATLSRNLYVVLSLCITYGILFSTLCTLPYSLLCDYYQSKKFAGSSADGTRRGMGVDISLLSCQYFLAQILVSLVLGPLTSAVGSANGVMYFSSLVSFLGCLYSSLFVIYEIPPSDAADEEHRPLLLNV</sequence>
<comment type="function">
    <text evidence="7">Proton-associated glucose transporter in the brain.</text>
</comment>
<comment type="catalytic activity">
    <reaction evidence="2">
        <text>D-galactose(in) + H(+)(in) = D-galactose(out) + H(+)(out)</text>
        <dbReference type="Rhea" id="RHEA:29019"/>
        <dbReference type="ChEBI" id="CHEBI:4139"/>
        <dbReference type="ChEBI" id="CHEBI:15378"/>
    </reaction>
</comment>
<comment type="catalytic activity">
    <reaction evidence="7">
        <text>D-glucose(out) + H(+)(out) = D-glucose(in) + H(+)(in)</text>
        <dbReference type="Rhea" id="RHEA:69556"/>
        <dbReference type="ChEBI" id="CHEBI:4167"/>
        <dbReference type="ChEBI" id="CHEBI:15378"/>
    </reaction>
</comment>
<comment type="subcellular location">
    <subcellularLocation>
        <location evidence="7">Membrane</location>
        <topology evidence="3">Multi-pass membrane protein</topology>
    </subcellularLocation>
</comment>
<comment type="tissue specificity">
    <text evidence="5">Expressed in adult heart, brain, muscle and kidney, with very strong expression in brain. Also expressed in fetal brain, kidney and lung.</text>
</comment>
<comment type="disease" evidence="7">
    <disease id="DI-05022">
        <name>Intellectual developmental disorder with neuropsychiatric features</name>
        <acronym>IDDNPF</acronym>
        <description>An autosomal recessive disorder characterized by moderate to severe intellectual disability, epilepsy, and variable neuropsychiatric features, such as anxiety, obsessive-compulsive behavior, and autistic features. Mild facial dysmorphism may also be present.</description>
        <dbReference type="MIM" id="617532"/>
    </disease>
    <text>The disease is caused by variants affecting the gene represented in this entry.</text>
</comment>
<comment type="similarity">
    <text evidence="8">Belongs to the glycoside-pentoside-hexuronide (GPH) cation symporter transporter (TC 2.A.2) family.</text>
</comment>
<comment type="sequence caution" evidence="8">
    <conflict type="miscellaneous discrepancy">
        <sequence resource="EMBL-CDS" id="AAD27583"/>
    </conflict>
    <text>Probable cloning artifact.</text>
</comment>
<dbReference type="EMBL" id="AL356072">
    <property type="status" value="NOT_ANNOTATED_CDS"/>
    <property type="molecule type" value="Genomic_DNA"/>
</dbReference>
<dbReference type="EMBL" id="CH471130">
    <property type="protein sequence ID" value="EAW71597.1"/>
    <property type="molecule type" value="Genomic_DNA"/>
</dbReference>
<dbReference type="EMBL" id="AF118274">
    <property type="protein sequence ID" value="AAD27583.1"/>
    <property type="status" value="ALT_SEQ"/>
    <property type="molecule type" value="mRNA"/>
</dbReference>
<dbReference type="CCDS" id="CCDS30577.3"/>
<dbReference type="RefSeq" id="NP_001073866.3">
    <property type="nucleotide sequence ID" value="NM_001080397.3"/>
</dbReference>
<dbReference type="FunCoup" id="Q9Y2W3">
    <property type="interactions" value="235"/>
</dbReference>
<dbReference type="IntAct" id="Q9Y2W3">
    <property type="interactions" value="6"/>
</dbReference>
<dbReference type="STRING" id="9606.ENSP00000418096"/>
<dbReference type="TCDB" id="2.A.2.4.10">
    <property type="family name" value="the glycoside-pentoside-hexuronide (gph):cation symporter family"/>
</dbReference>
<dbReference type="iPTMnet" id="Q9Y2W3"/>
<dbReference type="PhosphoSitePlus" id="Q9Y2W3"/>
<dbReference type="BioMuta" id="SLC45A1"/>
<dbReference type="DMDM" id="311033543"/>
<dbReference type="jPOST" id="Q9Y2W3"/>
<dbReference type="MassIVE" id="Q9Y2W3"/>
<dbReference type="PaxDb" id="9606-ENSP00000289877"/>
<dbReference type="PeptideAtlas" id="Q9Y2W3"/>
<dbReference type="ProteomicsDB" id="85916"/>
<dbReference type="Antibodypedia" id="57179">
    <property type="antibodies" value="14 antibodies from 5 providers"/>
</dbReference>
<dbReference type="DNASU" id="50651"/>
<dbReference type="Ensembl" id="ENST00000289877.8">
    <property type="protein sequence ID" value="ENSP00000289877.8"/>
    <property type="gene ID" value="ENSG00000162426.16"/>
</dbReference>
<dbReference type="Ensembl" id="ENST00000471889.7">
    <property type="protein sequence ID" value="ENSP00000418096.3"/>
    <property type="gene ID" value="ENSG00000162426.16"/>
</dbReference>
<dbReference type="GeneID" id="50651"/>
<dbReference type="KEGG" id="hsa:50651"/>
<dbReference type="MANE-Select" id="ENST00000471889.7">
    <property type="protein sequence ID" value="ENSP00000418096.3"/>
    <property type="RefSeq nucleotide sequence ID" value="NM_001080397.3"/>
    <property type="RefSeq protein sequence ID" value="NP_001073866.3"/>
</dbReference>
<dbReference type="UCSC" id="uc001apb.3">
    <property type="organism name" value="human"/>
</dbReference>
<dbReference type="UCSC" id="uc057byt.1">
    <property type="organism name" value="human"/>
</dbReference>
<dbReference type="AGR" id="HGNC:17939"/>
<dbReference type="CTD" id="50651"/>
<dbReference type="DisGeNET" id="50651"/>
<dbReference type="GeneCards" id="SLC45A1"/>
<dbReference type="HGNC" id="HGNC:17939">
    <property type="gene designation" value="SLC45A1"/>
</dbReference>
<dbReference type="HPA" id="ENSG00000162426">
    <property type="expression patterns" value="Tissue enhanced (brain)"/>
</dbReference>
<dbReference type="MalaCards" id="SLC45A1"/>
<dbReference type="MIM" id="605763">
    <property type="type" value="gene"/>
</dbReference>
<dbReference type="MIM" id="617532">
    <property type="type" value="phenotype"/>
</dbReference>
<dbReference type="neXtProt" id="NX_Q9Y2W3"/>
<dbReference type="OpenTargets" id="ENSG00000162426"/>
<dbReference type="Orphanet" id="88616">
    <property type="disease" value="Autosomal recessive non-syndromic intellectual disability"/>
</dbReference>
<dbReference type="VEuPathDB" id="HostDB:ENSG00000162426"/>
<dbReference type="eggNOG" id="KOG0637">
    <property type="taxonomic scope" value="Eukaryota"/>
</dbReference>
<dbReference type="GeneTree" id="ENSGT00950000182914"/>
<dbReference type="HOGENOM" id="CLU_015081_1_0_1"/>
<dbReference type="InParanoid" id="Q9Y2W3"/>
<dbReference type="OMA" id="CDYYQSR"/>
<dbReference type="OrthoDB" id="28755at2759"/>
<dbReference type="PAN-GO" id="Q9Y2W3">
    <property type="GO annotations" value="2 GO annotations based on evolutionary models"/>
</dbReference>
<dbReference type="PhylomeDB" id="Q9Y2W3"/>
<dbReference type="TreeFam" id="TF325412"/>
<dbReference type="PathwayCommons" id="Q9Y2W3"/>
<dbReference type="SignaLink" id="Q9Y2W3"/>
<dbReference type="BioGRID-ORCS" id="50651">
    <property type="hits" value="17 hits in 1140 CRISPR screens"/>
</dbReference>
<dbReference type="ChiTaRS" id="SLC45A1">
    <property type="organism name" value="human"/>
</dbReference>
<dbReference type="GenomeRNAi" id="50651"/>
<dbReference type="Pharos" id="Q9Y2W3">
    <property type="development level" value="Tdark"/>
</dbReference>
<dbReference type="PRO" id="PR:Q9Y2W3"/>
<dbReference type="Proteomes" id="UP000005640">
    <property type="component" value="Chromosome 1"/>
</dbReference>
<dbReference type="RNAct" id="Q9Y2W3">
    <property type="molecule type" value="protein"/>
</dbReference>
<dbReference type="Bgee" id="ENSG00000162426">
    <property type="expression patterns" value="Expressed in male germ line stem cell (sensu Vertebrata) in testis and 106 other cell types or tissues"/>
</dbReference>
<dbReference type="ExpressionAtlas" id="Q9Y2W3">
    <property type="expression patterns" value="baseline and differential"/>
</dbReference>
<dbReference type="GO" id="GO:0016020">
    <property type="term" value="C:membrane"/>
    <property type="evidence" value="ECO:0000318"/>
    <property type="project" value="GO_Central"/>
</dbReference>
<dbReference type="GO" id="GO:0005356">
    <property type="term" value="F:D-glucose:proton symporter activity"/>
    <property type="evidence" value="ECO:0000315"/>
    <property type="project" value="UniProtKB"/>
</dbReference>
<dbReference type="GO" id="GO:0015517">
    <property type="term" value="F:galactose:proton symporter activity"/>
    <property type="evidence" value="ECO:0000250"/>
    <property type="project" value="UniProtKB"/>
</dbReference>
<dbReference type="GO" id="GO:0008506">
    <property type="term" value="F:sucrose:proton symporter activity"/>
    <property type="evidence" value="ECO:0000318"/>
    <property type="project" value="GO_Central"/>
</dbReference>
<dbReference type="GO" id="GO:1904659">
    <property type="term" value="P:D-glucose transmembrane transport"/>
    <property type="evidence" value="ECO:0000315"/>
    <property type="project" value="UniProtKB"/>
</dbReference>
<dbReference type="GO" id="GO:0015757">
    <property type="term" value="P:galactose transmembrane transport"/>
    <property type="evidence" value="ECO:0000250"/>
    <property type="project" value="UniProtKB"/>
</dbReference>
<dbReference type="CDD" id="cd17313">
    <property type="entry name" value="MFS_SLC45_SUC"/>
    <property type="match status" value="1"/>
</dbReference>
<dbReference type="FunFam" id="1.20.1250.20:FF:000069">
    <property type="entry name" value="Solute carrier family 45 member 4"/>
    <property type="match status" value="1"/>
</dbReference>
<dbReference type="FunFam" id="1.20.1250.20:FF:000120">
    <property type="entry name" value="Solute carrier family 45, member 1"/>
    <property type="match status" value="1"/>
</dbReference>
<dbReference type="Gene3D" id="1.20.1250.20">
    <property type="entry name" value="MFS general substrate transporter like domains"/>
    <property type="match status" value="2"/>
</dbReference>
<dbReference type="InterPro" id="IPR011701">
    <property type="entry name" value="MFS"/>
</dbReference>
<dbReference type="InterPro" id="IPR036259">
    <property type="entry name" value="MFS_trans_sf"/>
</dbReference>
<dbReference type="PANTHER" id="PTHR19432:SF6">
    <property type="entry name" value="PROTON-ASSOCIATED SUGAR TRANSPORTER A"/>
    <property type="match status" value="1"/>
</dbReference>
<dbReference type="PANTHER" id="PTHR19432">
    <property type="entry name" value="SUGAR TRANSPORTER"/>
    <property type="match status" value="1"/>
</dbReference>
<dbReference type="Pfam" id="PF07690">
    <property type="entry name" value="MFS_1"/>
    <property type="match status" value="1"/>
</dbReference>
<dbReference type="SUPFAM" id="SSF103473">
    <property type="entry name" value="MFS general substrate transporter"/>
    <property type="match status" value="1"/>
</dbReference>
<gene>
    <name evidence="9" type="primary">SLC45A1</name>
    <name type="synonym">DNB5</name>
</gene>
<reference key="1">
    <citation type="journal article" date="2006" name="Nature">
        <title>The DNA sequence and biological annotation of human chromosome 1.</title>
        <authorList>
            <person name="Gregory S.G."/>
            <person name="Barlow K.F."/>
            <person name="McLay K.E."/>
            <person name="Kaul R."/>
            <person name="Swarbreck D."/>
            <person name="Dunham A."/>
            <person name="Scott C.E."/>
            <person name="Howe K.L."/>
            <person name="Woodfine K."/>
            <person name="Spencer C.C.A."/>
            <person name="Jones M.C."/>
            <person name="Gillson C."/>
            <person name="Searle S."/>
            <person name="Zhou Y."/>
            <person name="Kokocinski F."/>
            <person name="McDonald L."/>
            <person name="Evans R."/>
            <person name="Phillips K."/>
            <person name="Atkinson A."/>
            <person name="Cooper R."/>
            <person name="Jones C."/>
            <person name="Hall R.E."/>
            <person name="Andrews T.D."/>
            <person name="Lloyd C."/>
            <person name="Ainscough R."/>
            <person name="Almeida J.P."/>
            <person name="Ambrose K.D."/>
            <person name="Anderson F."/>
            <person name="Andrew R.W."/>
            <person name="Ashwell R.I.S."/>
            <person name="Aubin K."/>
            <person name="Babbage A.K."/>
            <person name="Bagguley C.L."/>
            <person name="Bailey J."/>
            <person name="Beasley H."/>
            <person name="Bethel G."/>
            <person name="Bird C.P."/>
            <person name="Bray-Allen S."/>
            <person name="Brown J.Y."/>
            <person name="Brown A.J."/>
            <person name="Buckley D."/>
            <person name="Burton J."/>
            <person name="Bye J."/>
            <person name="Carder C."/>
            <person name="Chapman J.C."/>
            <person name="Clark S.Y."/>
            <person name="Clarke G."/>
            <person name="Clee C."/>
            <person name="Cobley V."/>
            <person name="Collier R.E."/>
            <person name="Corby N."/>
            <person name="Coville G.J."/>
            <person name="Davies J."/>
            <person name="Deadman R."/>
            <person name="Dunn M."/>
            <person name="Earthrowl M."/>
            <person name="Ellington A.G."/>
            <person name="Errington H."/>
            <person name="Frankish A."/>
            <person name="Frankland J."/>
            <person name="French L."/>
            <person name="Garner P."/>
            <person name="Garnett J."/>
            <person name="Gay L."/>
            <person name="Ghori M.R.J."/>
            <person name="Gibson R."/>
            <person name="Gilby L.M."/>
            <person name="Gillett W."/>
            <person name="Glithero R.J."/>
            <person name="Grafham D.V."/>
            <person name="Griffiths C."/>
            <person name="Griffiths-Jones S."/>
            <person name="Grocock R."/>
            <person name="Hammond S."/>
            <person name="Harrison E.S.I."/>
            <person name="Hart E."/>
            <person name="Haugen E."/>
            <person name="Heath P.D."/>
            <person name="Holmes S."/>
            <person name="Holt K."/>
            <person name="Howden P.J."/>
            <person name="Hunt A.R."/>
            <person name="Hunt S.E."/>
            <person name="Hunter G."/>
            <person name="Isherwood J."/>
            <person name="James R."/>
            <person name="Johnson C."/>
            <person name="Johnson D."/>
            <person name="Joy A."/>
            <person name="Kay M."/>
            <person name="Kershaw J.K."/>
            <person name="Kibukawa M."/>
            <person name="Kimberley A.M."/>
            <person name="King A."/>
            <person name="Knights A.J."/>
            <person name="Lad H."/>
            <person name="Laird G."/>
            <person name="Lawlor S."/>
            <person name="Leongamornlert D.A."/>
            <person name="Lloyd D.M."/>
            <person name="Loveland J."/>
            <person name="Lovell J."/>
            <person name="Lush M.J."/>
            <person name="Lyne R."/>
            <person name="Martin S."/>
            <person name="Mashreghi-Mohammadi M."/>
            <person name="Matthews L."/>
            <person name="Matthews N.S.W."/>
            <person name="McLaren S."/>
            <person name="Milne S."/>
            <person name="Mistry S."/>
            <person name="Moore M.J.F."/>
            <person name="Nickerson T."/>
            <person name="O'Dell C.N."/>
            <person name="Oliver K."/>
            <person name="Palmeiri A."/>
            <person name="Palmer S.A."/>
            <person name="Parker A."/>
            <person name="Patel D."/>
            <person name="Pearce A.V."/>
            <person name="Peck A.I."/>
            <person name="Pelan S."/>
            <person name="Phelps K."/>
            <person name="Phillimore B.J."/>
            <person name="Plumb R."/>
            <person name="Rajan J."/>
            <person name="Raymond C."/>
            <person name="Rouse G."/>
            <person name="Saenphimmachak C."/>
            <person name="Sehra H.K."/>
            <person name="Sheridan E."/>
            <person name="Shownkeen R."/>
            <person name="Sims S."/>
            <person name="Skuce C.D."/>
            <person name="Smith M."/>
            <person name="Steward C."/>
            <person name="Subramanian S."/>
            <person name="Sycamore N."/>
            <person name="Tracey A."/>
            <person name="Tromans A."/>
            <person name="Van Helmond Z."/>
            <person name="Wall M."/>
            <person name="Wallis J.M."/>
            <person name="White S."/>
            <person name="Whitehead S.L."/>
            <person name="Wilkinson J.E."/>
            <person name="Willey D.L."/>
            <person name="Williams H."/>
            <person name="Wilming L."/>
            <person name="Wray P.W."/>
            <person name="Wu Z."/>
            <person name="Coulson A."/>
            <person name="Vaudin M."/>
            <person name="Sulston J.E."/>
            <person name="Durbin R.M."/>
            <person name="Hubbard T."/>
            <person name="Wooster R."/>
            <person name="Dunham I."/>
            <person name="Carter N.P."/>
            <person name="McVean G."/>
            <person name="Ross M.T."/>
            <person name="Harrow J."/>
            <person name="Olson M.V."/>
            <person name="Beck S."/>
            <person name="Rogers J."/>
            <person name="Bentley D.R."/>
        </authorList>
    </citation>
    <scope>NUCLEOTIDE SEQUENCE [LARGE SCALE GENOMIC DNA]</scope>
</reference>
<reference key="2">
    <citation type="submission" date="2005-07" db="EMBL/GenBank/DDBJ databases">
        <authorList>
            <person name="Mural R.J."/>
            <person name="Istrail S."/>
            <person name="Sutton G.G."/>
            <person name="Florea L."/>
            <person name="Halpern A.L."/>
            <person name="Mobarry C.M."/>
            <person name="Lippert R."/>
            <person name="Walenz B."/>
            <person name="Shatkay H."/>
            <person name="Dew I."/>
            <person name="Miller J.R."/>
            <person name="Flanigan M.J."/>
            <person name="Edwards N.J."/>
            <person name="Bolanos R."/>
            <person name="Fasulo D."/>
            <person name="Halldorsson B.V."/>
            <person name="Hannenhalli S."/>
            <person name="Turner R."/>
            <person name="Yooseph S."/>
            <person name="Lu F."/>
            <person name="Nusskern D.R."/>
            <person name="Shue B.C."/>
            <person name="Zheng X.H."/>
            <person name="Zhong F."/>
            <person name="Delcher A.L."/>
            <person name="Huson D.H."/>
            <person name="Kravitz S.A."/>
            <person name="Mouchard L."/>
            <person name="Reinert K."/>
            <person name="Remington K.A."/>
            <person name="Clark A.G."/>
            <person name="Waterman M.S."/>
            <person name="Eichler E.E."/>
            <person name="Adams M.D."/>
            <person name="Hunkapiller M.W."/>
            <person name="Myers E.W."/>
            <person name="Venter J.C."/>
        </authorList>
    </citation>
    <scope>NUCLEOTIDE SEQUENCE [LARGE SCALE GENOMIC DNA]</scope>
</reference>
<reference key="3">
    <citation type="journal article" date="2000" name="Genomics">
        <title>Identification and characterization of novel genes located at the t(1;15)(p36.2;q24) translocation breakpoint in the neuroblastoma cell line NGP.</title>
        <authorList>
            <person name="Amler L.C."/>
            <person name="Bauer A."/>
            <person name="Corvi R."/>
            <person name="Dihlmann S."/>
            <person name="Praml C."/>
            <person name="Cavenee W.K."/>
            <person name="Schwab M."/>
            <person name="Hampton G.M."/>
        </authorList>
    </citation>
    <scope>NUCLEOTIDE SEQUENCE [MRNA] OF 242-748</scope>
    <scope>TISSUE SPECIFICITY</scope>
</reference>
<reference key="4">
    <citation type="journal article" date="2017" name="Am. J. Hum. Genet.">
        <title>Dysfunction of the cerebral glucose transporter SLC45A1 in individuals with intellectual disability and epilepsy.</title>
        <authorList>
            <person name="Srour M."/>
            <person name="Shimokawa N."/>
            <person name="Hamdan F.F."/>
            <person name="Nassif C."/>
            <person name="Poulin C."/>
            <person name="Al Gazali L."/>
            <person name="Rosenfeld J.A."/>
            <person name="Koibuchi N."/>
            <person name="Rouleau G.A."/>
            <person name="Al Shamsi A."/>
            <person name="Michaud J.L."/>
        </authorList>
    </citation>
    <scope>INVOLVEMENT IN IDDNPF</scope>
    <scope>VARIANTS IDDNPF TRP-176 AND VAL-210</scope>
    <scope>CHARACTERIZATION OF VARIANTS IDDNPF THR-56; TRP-176 AND VAL-210</scope>
    <scope>FUNCTION</scope>
    <scope>SUBCELLULAR LOCATION</scope>
    <scope>TRANSPORTER ACTIVITY</scope>
</reference>
<reference key="5">
    <citation type="journal article" date="2017" name="Mol. Psychiatry">
        <title>Clinical genomics expands the morbid genome of intellectual disability and offers a high diagnostic yield.</title>
        <authorList>
            <person name="Anazi S."/>
            <person name="Maddirevula S."/>
            <person name="Faqeih E."/>
            <person name="Alsedairy H."/>
            <person name="Alzahrani F."/>
            <person name="Shamseldin H.E."/>
            <person name="Patel N."/>
            <person name="Hashem M."/>
            <person name="Ibrahim N."/>
            <person name="Abdulwahab F."/>
            <person name="Ewida N."/>
            <person name="Alsaif H.S."/>
            <person name="Al Sharif H."/>
            <person name="Alamoudi W."/>
            <person name="Kentab A."/>
            <person name="Bashiri F.A."/>
            <person name="Alnaser M."/>
            <person name="AlWadei A.H."/>
            <person name="Alfadhel M."/>
            <person name="Eyaid W."/>
            <person name="Hashem A."/>
            <person name="Al Asmari A."/>
            <person name="Saleh M.M."/>
            <person name="AlSaman A."/>
            <person name="Alhasan K.A."/>
            <person name="Alsughayir M."/>
            <person name="Al Shammari M."/>
            <person name="Mahmoud A."/>
            <person name="Al-Hassnan Z.N."/>
            <person name="Al-Husain M."/>
            <person name="Osama Khalil R."/>
            <person name="Abd El Meguid N."/>
            <person name="Masri A."/>
            <person name="Ali R."/>
            <person name="Ben-Omran T."/>
            <person name="El Fishway P."/>
            <person name="Hashish A."/>
            <person name="Ercan Sencicek A."/>
            <person name="State M."/>
            <person name="Alazami A.M."/>
            <person name="Salih M.A."/>
            <person name="Altassan N."/>
            <person name="Arold S.T."/>
            <person name="Abouelhoda M."/>
            <person name="Wakil S.M."/>
            <person name="Monies D."/>
            <person name="Shaheen R."/>
            <person name="Alkuraya F.S."/>
        </authorList>
    </citation>
    <scope>VARIANT THR-56</scope>
</reference>
<accession>Q9Y2W3</accession>
<accession>A0A0A0MT80</accession>
<accession>A0A2H2EQP0</accession>
<accession>Q5VY46</accession>
<accession>Q5VY49</accession>
<organism>
    <name type="scientific">Homo sapiens</name>
    <name type="common">Human</name>
    <dbReference type="NCBI Taxonomy" id="9606"/>
    <lineage>
        <taxon>Eukaryota</taxon>
        <taxon>Metazoa</taxon>
        <taxon>Chordata</taxon>
        <taxon>Craniata</taxon>
        <taxon>Vertebrata</taxon>
        <taxon>Euteleostomi</taxon>
        <taxon>Mammalia</taxon>
        <taxon>Eutheria</taxon>
        <taxon>Euarchontoglires</taxon>
        <taxon>Primates</taxon>
        <taxon>Haplorrhini</taxon>
        <taxon>Catarrhini</taxon>
        <taxon>Hominidae</taxon>
        <taxon>Homo</taxon>
    </lineage>
</organism>
<protein>
    <recommendedName>
        <fullName evidence="8">Proton-associated sugar transporter A</fullName>
        <shortName>PAST-A</shortName>
    </recommendedName>
    <alternativeName>
        <fullName>Deleted in neuroblastoma 5 protein</fullName>
        <shortName>DNb-5</shortName>
    </alternativeName>
    <alternativeName>
        <fullName>Solute carrier family 45 member 1</fullName>
    </alternativeName>
</protein>
<name>S45A1_HUMAN</name>
<feature type="chain" id="PRO_0000122514" description="Proton-associated sugar transporter A">
    <location>
        <begin position="1"/>
        <end position="748"/>
    </location>
</feature>
<feature type="transmembrane region" description="Helical" evidence="3">
    <location>
        <begin position="93"/>
        <end position="113"/>
    </location>
</feature>
<feature type="transmembrane region" description="Helical" evidence="3">
    <location>
        <begin position="123"/>
        <end position="143"/>
    </location>
</feature>
<feature type="transmembrane region" description="Helical" evidence="3">
    <location>
        <begin position="155"/>
        <end position="175"/>
    </location>
</feature>
<feature type="transmembrane region" description="Helical" evidence="3">
    <location>
        <begin position="191"/>
        <end position="211"/>
    </location>
</feature>
<feature type="transmembrane region" description="Helical" evidence="3">
    <location>
        <begin position="233"/>
        <end position="253"/>
    </location>
</feature>
<feature type="transmembrane region" description="Helical" evidence="3">
    <location>
        <begin position="268"/>
        <end position="288"/>
    </location>
</feature>
<feature type="transmembrane region" description="Helical" evidence="3">
    <location>
        <begin position="533"/>
        <end position="553"/>
    </location>
</feature>
<feature type="transmembrane region" description="Helical" evidence="3">
    <location>
        <begin position="573"/>
        <end position="593"/>
    </location>
</feature>
<feature type="transmembrane region" description="Helical" evidence="3">
    <location>
        <begin position="600"/>
        <end position="620"/>
    </location>
</feature>
<feature type="transmembrane region" description="Helical" evidence="3">
    <location>
        <begin position="627"/>
        <end position="647"/>
    </location>
</feature>
<feature type="transmembrane region" description="Helical" evidence="3">
    <location>
        <begin position="685"/>
        <end position="705"/>
    </location>
</feature>
<feature type="transmembrane region" description="Helical" evidence="3">
    <location>
        <begin position="708"/>
        <end position="728"/>
    </location>
</feature>
<feature type="region of interest" description="Disordered" evidence="4">
    <location>
        <begin position="294"/>
        <end position="339"/>
    </location>
</feature>
<feature type="compositionally biased region" description="Pro residues" evidence="4">
    <location>
        <begin position="308"/>
        <end position="317"/>
    </location>
</feature>
<feature type="modified residue" description="Phosphothreonine" evidence="1">
    <location>
        <position position="497"/>
    </location>
</feature>
<feature type="sequence variant" id="VAR_079344" description="In IDDNPF; no effect on protein abundance; no effect on glucose transport activity; dbSNP:rs141816307." evidence="6 7">
    <original>I</original>
    <variation>T</variation>
    <location>
        <position position="56"/>
    </location>
</feature>
<feature type="sequence variant" id="VAR_079345" description="In IDDNPF; no effect on protein abundance; decreased glucose transport activity; dbSNP:rs781036625." evidence="7">
    <original>R</original>
    <variation>W</variation>
    <location>
        <position position="176"/>
    </location>
</feature>
<feature type="sequence variant" id="VAR_079346" description="In IDDNPF; no effect on protein abundance; decreased glucose transport activity; dbSNP:rs150539474." evidence="7">
    <original>A</original>
    <variation>V</variation>
    <location>
        <position position="210"/>
    </location>
</feature>
<feature type="sequence conflict" description="In Ref. 3; AAD27583." evidence="8" ref="3">
    <original>V</original>
    <variation>L</variation>
    <location>
        <position position="248"/>
    </location>
</feature>
<feature type="sequence conflict" description="In Ref. 3; AAD27583." evidence="8" ref="3">
    <original>L</original>
    <variation>F</variation>
    <location>
        <position position="266"/>
    </location>
</feature>
<keyword id="KW-0225">Disease variant</keyword>
<keyword id="KW-0887">Epilepsy</keyword>
<keyword id="KW-0991">Intellectual disability</keyword>
<keyword id="KW-0472">Membrane</keyword>
<keyword id="KW-0597">Phosphoprotein</keyword>
<keyword id="KW-1267">Proteomics identification</keyword>
<keyword id="KW-1185">Reference proteome</keyword>
<keyword id="KW-0762">Sugar transport</keyword>
<keyword id="KW-0769">Symport</keyword>
<keyword id="KW-0812">Transmembrane</keyword>
<keyword id="KW-1133">Transmembrane helix</keyword>
<keyword id="KW-0813">Transport</keyword>